<evidence type="ECO:0000250" key="1"/>
<evidence type="ECO:0000255" key="2">
    <source>
        <dbReference type="HAMAP-Rule" id="MF_00768"/>
    </source>
</evidence>
<feature type="chain" id="PRO_1000190482" description="HTH-type transcriptional regulator BetI">
    <location>
        <begin position="1"/>
        <end position="195"/>
    </location>
</feature>
<feature type="domain" description="HTH tetR-type" evidence="2">
    <location>
        <begin position="8"/>
        <end position="68"/>
    </location>
</feature>
<feature type="DNA-binding region" description="H-T-H motif" evidence="2">
    <location>
        <begin position="31"/>
        <end position="50"/>
    </location>
</feature>
<sequence>MPKLGMQSIRRRQLIDATLEAINEVGMHDATIAQIARRAGVSTGIISHYFRDKNGLLEATMRDITSQLRDAVLNRLHALPQGSAEQRLQAIVGGNFDETQVSSAAMKAWLAFWASSMHQPMLYRLQQVSSRRLLSNLVSEFRRELPREQAQEAGYGLAALIDGLWLRAALSGKPLDKTRANSLTRHFITQHLPTD</sequence>
<protein>
    <recommendedName>
        <fullName evidence="2">HTH-type transcriptional regulator BetI</fullName>
    </recommendedName>
</protein>
<dbReference type="EMBL" id="CP000948">
    <property type="protein sequence ID" value="ACB01478.1"/>
    <property type="molecule type" value="Genomic_DNA"/>
</dbReference>
<dbReference type="RefSeq" id="WP_001335745.1">
    <property type="nucleotide sequence ID" value="NC_010473.1"/>
</dbReference>
<dbReference type="SMR" id="B1XET8"/>
<dbReference type="KEGG" id="ecd:ECDH10B_0300"/>
<dbReference type="HOGENOM" id="CLU_069356_15_4_6"/>
<dbReference type="UniPathway" id="UPA00529"/>
<dbReference type="GO" id="GO:0003700">
    <property type="term" value="F:DNA-binding transcription factor activity"/>
    <property type="evidence" value="ECO:0007669"/>
    <property type="project" value="UniProtKB-UniRule"/>
</dbReference>
<dbReference type="GO" id="GO:0000976">
    <property type="term" value="F:transcription cis-regulatory region binding"/>
    <property type="evidence" value="ECO:0007669"/>
    <property type="project" value="TreeGrafter"/>
</dbReference>
<dbReference type="GO" id="GO:0019285">
    <property type="term" value="P:glycine betaine biosynthetic process from choline"/>
    <property type="evidence" value="ECO:0007669"/>
    <property type="project" value="UniProtKB-UniRule"/>
</dbReference>
<dbReference type="GO" id="GO:0045892">
    <property type="term" value="P:negative regulation of DNA-templated transcription"/>
    <property type="evidence" value="ECO:0007669"/>
    <property type="project" value="UniProtKB-UniRule"/>
</dbReference>
<dbReference type="FunFam" id="1.10.357.10:FF:000009">
    <property type="entry name" value="HTH-type transcriptional regulator BetI"/>
    <property type="match status" value="1"/>
</dbReference>
<dbReference type="Gene3D" id="1.10.357.10">
    <property type="entry name" value="Tetracycline Repressor, domain 2"/>
    <property type="match status" value="1"/>
</dbReference>
<dbReference type="HAMAP" id="MF_00768">
    <property type="entry name" value="HTH_type_BetI"/>
    <property type="match status" value="1"/>
</dbReference>
<dbReference type="InterPro" id="IPR039538">
    <property type="entry name" value="BetI_C"/>
</dbReference>
<dbReference type="InterPro" id="IPR023772">
    <property type="entry name" value="DNA-bd_HTH_TetR-type_CS"/>
</dbReference>
<dbReference type="InterPro" id="IPR009057">
    <property type="entry name" value="Homeodomain-like_sf"/>
</dbReference>
<dbReference type="InterPro" id="IPR050109">
    <property type="entry name" value="HTH-type_TetR-like_transc_reg"/>
</dbReference>
<dbReference type="InterPro" id="IPR001647">
    <property type="entry name" value="HTH_TetR"/>
</dbReference>
<dbReference type="InterPro" id="IPR036271">
    <property type="entry name" value="Tet_transcr_reg_TetR-rel_C_sf"/>
</dbReference>
<dbReference type="InterPro" id="IPR017757">
    <property type="entry name" value="Tscrpt_rep_BetI"/>
</dbReference>
<dbReference type="NCBIfam" id="TIGR03384">
    <property type="entry name" value="betaine_BetI"/>
    <property type="match status" value="1"/>
</dbReference>
<dbReference type="NCBIfam" id="NF001978">
    <property type="entry name" value="PRK00767.1"/>
    <property type="match status" value="1"/>
</dbReference>
<dbReference type="PANTHER" id="PTHR30055:SF234">
    <property type="entry name" value="HTH-TYPE TRANSCRIPTIONAL REGULATOR BETI"/>
    <property type="match status" value="1"/>
</dbReference>
<dbReference type="PANTHER" id="PTHR30055">
    <property type="entry name" value="HTH-TYPE TRANSCRIPTIONAL REGULATOR RUTR"/>
    <property type="match status" value="1"/>
</dbReference>
<dbReference type="Pfam" id="PF13977">
    <property type="entry name" value="TetR_C_6"/>
    <property type="match status" value="1"/>
</dbReference>
<dbReference type="Pfam" id="PF00440">
    <property type="entry name" value="TetR_N"/>
    <property type="match status" value="1"/>
</dbReference>
<dbReference type="PRINTS" id="PR00455">
    <property type="entry name" value="HTHTETR"/>
</dbReference>
<dbReference type="SUPFAM" id="SSF46689">
    <property type="entry name" value="Homeodomain-like"/>
    <property type="match status" value="1"/>
</dbReference>
<dbReference type="SUPFAM" id="SSF48498">
    <property type="entry name" value="Tetracyclin repressor-like, C-terminal domain"/>
    <property type="match status" value="1"/>
</dbReference>
<dbReference type="PROSITE" id="PS01081">
    <property type="entry name" value="HTH_TETR_1"/>
    <property type="match status" value="1"/>
</dbReference>
<dbReference type="PROSITE" id="PS50977">
    <property type="entry name" value="HTH_TETR_2"/>
    <property type="match status" value="1"/>
</dbReference>
<accession>B1XET8</accession>
<organism>
    <name type="scientific">Escherichia coli (strain K12 / DH10B)</name>
    <dbReference type="NCBI Taxonomy" id="316385"/>
    <lineage>
        <taxon>Bacteria</taxon>
        <taxon>Pseudomonadati</taxon>
        <taxon>Pseudomonadota</taxon>
        <taxon>Gammaproteobacteria</taxon>
        <taxon>Enterobacterales</taxon>
        <taxon>Enterobacteriaceae</taxon>
        <taxon>Escherichia</taxon>
    </lineage>
</organism>
<keyword id="KW-0238">DNA-binding</keyword>
<keyword id="KW-0678">Repressor</keyword>
<keyword id="KW-0804">Transcription</keyword>
<keyword id="KW-0805">Transcription regulation</keyword>
<reference key="1">
    <citation type="journal article" date="2008" name="J. Bacteriol.">
        <title>The complete genome sequence of Escherichia coli DH10B: insights into the biology of a laboratory workhorse.</title>
        <authorList>
            <person name="Durfee T."/>
            <person name="Nelson R."/>
            <person name="Baldwin S."/>
            <person name="Plunkett G. III"/>
            <person name="Burland V."/>
            <person name="Mau B."/>
            <person name="Petrosino J.F."/>
            <person name="Qin X."/>
            <person name="Muzny D.M."/>
            <person name="Ayele M."/>
            <person name="Gibbs R.A."/>
            <person name="Csorgo B."/>
            <person name="Posfai G."/>
            <person name="Weinstock G.M."/>
            <person name="Blattner F.R."/>
        </authorList>
    </citation>
    <scope>NUCLEOTIDE SEQUENCE [LARGE SCALE GENOMIC DNA]</scope>
    <source>
        <strain>K12 / DH10B</strain>
    </source>
</reference>
<comment type="function">
    <text evidence="1">Repressor involved in the biosynthesis of the osmoprotectant glycine betaine. It represses transcription of the choline transporter BetT and the genes of BetAB involved in the synthesis of glycine betaine (By similarity).</text>
</comment>
<comment type="pathway">
    <text>Amine and polyamine biosynthesis; betaine biosynthesis via choline pathway [regulation].</text>
</comment>
<proteinExistence type="inferred from homology"/>
<gene>
    <name evidence="2" type="primary">betI</name>
    <name type="ordered locus">ECDH10B_0300</name>
</gene>
<name>BETI_ECODH</name>